<organism>
    <name type="scientific">Kluyveromyces lactis (strain ATCC 8585 / CBS 2359 / DSM 70799 / NBRC 1267 / NRRL Y-1140 / WM37)</name>
    <name type="common">Yeast</name>
    <name type="synonym">Candida sphaerica</name>
    <dbReference type="NCBI Taxonomy" id="284590"/>
    <lineage>
        <taxon>Eukaryota</taxon>
        <taxon>Fungi</taxon>
        <taxon>Dikarya</taxon>
        <taxon>Ascomycota</taxon>
        <taxon>Saccharomycotina</taxon>
        <taxon>Saccharomycetes</taxon>
        <taxon>Saccharomycetales</taxon>
        <taxon>Saccharomycetaceae</taxon>
        <taxon>Kluyveromyces</taxon>
    </lineage>
</organism>
<gene>
    <name type="primary">RPS14</name>
    <name type="synonym">CRY1</name>
    <name type="ordered locus">KLLA0B07623g</name>
</gene>
<comment type="similarity">
    <text evidence="2">Belongs to the universal ribosomal protein uS11 family.</text>
</comment>
<reference key="1">
    <citation type="journal article" date="1991" name="Nucleic Acids Res.">
        <title>Altered response to growth rate changes in Kluyveromyces lactis versus Saccharomyces cerevisiae as demonstrated by heterologous expression of ribosomal protein 59 (CRY1).</title>
        <authorList>
            <person name="Larson G.P."/>
            <person name="Rossi J.J."/>
        </authorList>
    </citation>
    <scope>NUCLEOTIDE SEQUENCE [GENOMIC DNA]</scope>
    <source>
        <strain>ATCC 8585 / CBS 2359 / DSM 70799 / NBRC 1267 / NRRL Y-1140 / WM37</strain>
    </source>
</reference>
<reference key="2">
    <citation type="journal article" date="1992" name="Yeast">
        <title>Structural and putative regulatory sequences of Kluyveromyces ribosomal protein genes.</title>
        <authorList>
            <person name="Bergkamp-Steffens G.K."/>
            <person name="Hoekstra R."/>
            <person name="Planta R.J."/>
        </authorList>
    </citation>
    <scope>NUCLEOTIDE SEQUENCE [GENOMIC DNA]</scope>
</reference>
<reference key="3">
    <citation type="journal article" date="2004" name="Nature">
        <title>Genome evolution in yeasts.</title>
        <authorList>
            <person name="Dujon B."/>
            <person name="Sherman D."/>
            <person name="Fischer G."/>
            <person name="Durrens P."/>
            <person name="Casaregola S."/>
            <person name="Lafontaine I."/>
            <person name="de Montigny J."/>
            <person name="Marck C."/>
            <person name="Neuveglise C."/>
            <person name="Talla E."/>
            <person name="Goffard N."/>
            <person name="Frangeul L."/>
            <person name="Aigle M."/>
            <person name="Anthouard V."/>
            <person name="Babour A."/>
            <person name="Barbe V."/>
            <person name="Barnay S."/>
            <person name="Blanchin S."/>
            <person name="Beckerich J.-M."/>
            <person name="Beyne E."/>
            <person name="Bleykasten C."/>
            <person name="Boisrame A."/>
            <person name="Boyer J."/>
            <person name="Cattolico L."/>
            <person name="Confanioleri F."/>
            <person name="de Daruvar A."/>
            <person name="Despons L."/>
            <person name="Fabre E."/>
            <person name="Fairhead C."/>
            <person name="Ferry-Dumazet H."/>
            <person name="Groppi A."/>
            <person name="Hantraye F."/>
            <person name="Hennequin C."/>
            <person name="Jauniaux N."/>
            <person name="Joyet P."/>
            <person name="Kachouri R."/>
            <person name="Kerrest A."/>
            <person name="Koszul R."/>
            <person name="Lemaire M."/>
            <person name="Lesur I."/>
            <person name="Ma L."/>
            <person name="Muller H."/>
            <person name="Nicaud J.-M."/>
            <person name="Nikolski M."/>
            <person name="Oztas S."/>
            <person name="Ozier-Kalogeropoulos O."/>
            <person name="Pellenz S."/>
            <person name="Potier S."/>
            <person name="Richard G.-F."/>
            <person name="Straub M.-L."/>
            <person name="Suleau A."/>
            <person name="Swennen D."/>
            <person name="Tekaia F."/>
            <person name="Wesolowski-Louvel M."/>
            <person name="Westhof E."/>
            <person name="Wirth B."/>
            <person name="Zeniou-Meyer M."/>
            <person name="Zivanovic Y."/>
            <person name="Bolotin-Fukuhara M."/>
            <person name="Thierry A."/>
            <person name="Bouchier C."/>
            <person name="Caudron B."/>
            <person name="Scarpelli C."/>
            <person name="Gaillardin C."/>
            <person name="Weissenbach J."/>
            <person name="Wincker P."/>
            <person name="Souciet J.-L."/>
        </authorList>
    </citation>
    <scope>NUCLEOTIDE SEQUENCE [LARGE SCALE GENOMIC DNA]</scope>
    <source>
        <strain>ATCC 8585 / CBS 2359 / DSM 70799 / NBRC 1267 / NRRL Y-1140 / WM37</strain>
    </source>
</reference>
<keyword id="KW-0002">3D-structure</keyword>
<keyword id="KW-1185">Reference proteome</keyword>
<keyword id="KW-0687">Ribonucleoprotein</keyword>
<keyword id="KW-0689">Ribosomal protein</keyword>
<name>RS14_KLULA</name>
<protein>
    <recommendedName>
        <fullName evidence="2">Small ribosomal subunit protein uS11</fullName>
    </recommendedName>
    <alternativeName>
        <fullName>40S ribosomal protein S14</fullName>
    </alternativeName>
    <alternativeName>
        <fullName>RP59</fullName>
    </alternativeName>
</protein>
<sequence length="137" mass="14505">MANVVQAKDNSQVFGVARIFASFNDTFVHVTDLSGRETIARVTGGMKVKADRDESSPYAAMLAAQDVAAKCKEVGITAVHIKIRATGGTRSKTPGPGGQAALRALARSGLRIGRIEDVTPVPSDSTRKKGGRRGRRL</sequence>
<dbReference type="EMBL" id="X59860">
    <property type="protein sequence ID" value="CAA42520.1"/>
    <property type="molecule type" value="Genomic_DNA"/>
</dbReference>
<dbReference type="EMBL" id="AH004149">
    <property type="protein sequence ID" value="AAB24899.1"/>
    <property type="molecule type" value="Genomic_DNA"/>
</dbReference>
<dbReference type="EMBL" id="CR382122">
    <property type="protein sequence ID" value="CAH02262.1"/>
    <property type="molecule type" value="Genomic_DNA"/>
</dbReference>
<dbReference type="PIR" id="S22312">
    <property type="entry name" value="S22312"/>
</dbReference>
<dbReference type="RefSeq" id="XP_451869.1">
    <property type="nucleotide sequence ID" value="XM_451869.1"/>
</dbReference>
<dbReference type="PDB" id="3J80">
    <property type="method" value="EM"/>
    <property type="resolution" value="3.75 A"/>
    <property type="chains" value="O=1-137"/>
</dbReference>
<dbReference type="PDB" id="3J81">
    <property type="method" value="EM"/>
    <property type="resolution" value="4.00 A"/>
    <property type="chains" value="O=1-137"/>
</dbReference>
<dbReference type="PDB" id="3JAM">
    <property type="method" value="EM"/>
    <property type="resolution" value="3.46 A"/>
    <property type="chains" value="O=1-137"/>
</dbReference>
<dbReference type="PDB" id="3JAP">
    <property type="method" value="EM"/>
    <property type="resolution" value="4.90 A"/>
    <property type="chains" value="O=1-137"/>
</dbReference>
<dbReference type="PDB" id="5IT7">
    <property type="method" value="EM"/>
    <property type="resolution" value="3.60 A"/>
    <property type="chains" value="O=11-137"/>
</dbReference>
<dbReference type="PDB" id="5IT9">
    <property type="method" value="EM"/>
    <property type="resolution" value="3.80 A"/>
    <property type="chains" value="O=11-137"/>
</dbReference>
<dbReference type="PDB" id="6FYX">
    <property type="method" value="EM"/>
    <property type="resolution" value="3.05 A"/>
    <property type="chains" value="O=1-137"/>
</dbReference>
<dbReference type="PDB" id="6FYY">
    <property type="method" value="EM"/>
    <property type="resolution" value="3.05 A"/>
    <property type="chains" value="O=1-137"/>
</dbReference>
<dbReference type="PDB" id="6GSM">
    <property type="method" value="EM"/>
    <property type="resolution" value="5.15 A"/>
    <property type="chains" value="O=11-137"/>
</dbReference>
<dbReference type="PDB" id="6GSN">
    <property type="method" value="EM"/>
    <property type="resolution" value="5.75 A"/>
    <property type="chains" value="O=11-137"/>
</dbReference>
<dbReference type="PDB" id="6UZ7">
    <property type="method" value="EM"/>
    <property type="resolution" value="3.60 A"/>
    <property type="chains" value="O=1-137"/>
</dbReference>
<dbReference type="PDB" id="8I7J">
    <property type="method" value="EM"/>
    <property type="resolution" value="4.60 A"/>
    <property type="chains" value="O=1-137"/>
</dbReference>
<dbReference type="PDB" id="8RW1">
    <property type="method" value="EM"/>
    <property type="resolution" value="3.35 A"/>
    <property type="chains" value="O=1-137"/>
</dbReference>
<dbReference type="PDB" id="8S8D">
    <property type="method" value="EM"/>
    <property type="resolution" value="3.45 A"/>
    <property type="chains" value="O=1-137"/>
</dbReference>
<dbReference type="PDB" id="8S8E">
    <property type="method" value="EM"/>
    <property type="resolution" value="3.85 A"/>
    <property type="chains" value="O=1-137"/>
</dbReference>
<dbReference type="PDB" id="8S8F">
    <property type="method" value="EM"/>
    <property type="resolution" value="3.95 A"/>
    <property type="chains" value="O=1-137"/>
</dbReference>
<dbReference type="PDB" id="8S8G">
    <property type="method" value="EM"/>
    <property type="resolution" value="4.00 A"/>
    <property type="chains" value="O=1-137"/>
</dbReference>
<dbReference type="PDB" id="8S8H">
    <property type="method" value="EM"/>
    <property type="resolution" value="4.00 A"/>
    <property type="chains" value="O=1-137"/>
</dbReference>
<dbReference type="PDB" id="8S8I">
    <property type="method" value="EM"/>
    <property type="resolution" value="4.30 A"/>
    <property type="chains" value="O=1-137"/>
</dbReference>
<dbReference type="PDB" id="8S8J">
    <property type="method" value="EM"/>
    <property type="resolution" value="4.70 A"/>
    <property type="chains" value="O=1-137"/>
</dbReference>
<dbReference type="PDB" id="8S8K">
    <property type="method" value="EM"/>
    <property type="resolution" value="4.00 A"/>
    <property type="chains" value="O=1-137"/>
</dbReference>
<dbReference type="PDBsum" id="3J80"/>
<dbReference type="PDBsum" id="3J81"/>
<dbReference type="PDBsum" id="3JAM"/>
<dbReference type="PDBsum" id="3JAP"/>
<dbReference type="PDBsum" id="5IT7"/>
<dbReference type="PDBsum" id="5IT9"/>
<dbReference type="PDBsum" id="6FYX"/>
<dbReference type="PDBsum" id="6FYY"/>
<dbReference type="PDBsum" id="6GSM"/>
<dbReference type="PDBsum" id="6GSN"/>
<dbReference type="PDBsum" id="6UZ7"/>
<dbReference type="PDBsum" id="8I7J"/>
<dbReference type="PDBsum" id="8RW1"/>
<dbReference type="PDBsum" id="8S8D"/>
<dbReference type="PDBsum" id="8S8E"/>
<dbReference type="PDBsum" id="8S8F"/>
<dbReference type="PDBsum" id="8S8G"/>
<dbReference type="PDBsum" id="8S8H"/>
<dbReference type="PDBsum" id="8S8I"/>
<dbReference type="PDBsum" id="8S8J"/>
<dbReference type="PDBsum" id="8S8K"/>
<dbReference type="EMDB" id="EMD-0057"/>
<dbReference type="EMDB" id="EMD-0058"/>
<dbReference type="EMDB" id="EMD-19541"/>
<dbReference type="EMDB" id="EMD-19801"/>
<dbReference type="EMDB" id="EMD-19802"/>
<dbReference type="EMDB" id="EMD-19803"/>
<dbReference type="EMDB" id="EMD-19804"/>
<dbReference type="EMDB" id="EMD-19805"/>
<dbReference type="EMDB" id="EMD-19806"/>
<dbReference type="EMDB" id="EMD-19807"/>
<dbReference type="EMDB" id="EMD-19808"/>
<dbReference type="EMDB" id="EMD-20952"/>
<dbReference type="EMDB" id="EMD-35216"/>
<dbReference type="EMDB" id="EMD-4327"/>
<dbReference type="EMDB" id="EMD-4328"/>
<dbReference type="EMDB" id="EMD-8123"/>
<dbReference type="EMDB" id="EMD-8124"/>
<dbReference type="SMR" id="P27069"/>
<dbReference type="FunCoup" id="P27069">
    <property type="interactions" value="1165"/>
</dbReference>
<dbReference type="STRING" id="284590.P27069"/>
<dbReference type="PaxDb" id="284590-P27069"/>
<dbReference type="KEGG" id="kla:KLLA0_B07623g"/>
<dbReference type="eggNOG" id="KOG0407">
    <property type="taxonomic scope" value="Eukaryota"/>
</dbReference>
<dbReference type="HOGENOM" id="CLU_072439_6_0_1"/>
<dbReference type="InParanoid" id="P27069"/>
<dbReference type="OMA" id="IYASHND"/>
<dbReference type="EvolutionaryTrace" id="P27069"/>
<dbReference type="Proteomes" id="UP000000598">
    <property type="component" value="Chromosome B"/>
</dbReference>
<dbReference type="GO" id="GO:1990904">
    <property type="term" value="C:ribonucleoprotein complex"/>
    <property type="evidence" value="ECO:0007669"/>
    <property type="project" value="UniProtKB-KW"/>
</dbReference>
<dbReference type="GO" id="GO:0005840">
    <property type="term" value="C:ribosome"/>
    <property type="evidence" value="ECO:0007669"/>
    <property type="project" value="UniProtKB-KW"/>
</dbReference>
<dbReference type="GO" id="GO:0003735">
    <property type="term" value="F:structural constituent of ribosome"/>
    <property type="evidence" value="ECO:0007669"/>
    <property type="project" value="InterPro"/>
</dbReference>
<dbReference type="GO" id="GO:0006412">
    <property type="term" value="P:translation"/>
    <property type="evidence" value="ECO:0007669"/>
    <property type="project" value="InterPro"/>
</dbReference>
<dbReference type="FunFam" id="3.30.420.80:FF:000002">
    <property type="entry name" value="40S ribosomal protein S14"/>
    <property type="match status" value="1"/>
</dbReference>
<dbReference type="Gene3D" id="3.30.420.80">
    <property type="entry name" value="Ribosomal protein S11"/>
    <property type="match status" value="1"/>
</dbReference>
<dbReference type="HAMAP" id="MF_01310">
    <property type="entry name" value="Ribosomal_uS11"/>
    <property type="match status" value="1"/>
</dbReference>
<dbReference type="InterPro" id="IPR001971">
    <property type="entry name" value="Ribosomal_uS11"/>
</dbReference>
<dbReference type="InterPro" id="IPR018102">
    <property type="entry name" value="Ribosomal_uS11_CS"/>
</dbReference>
<dbReference type="InterPro" id="IPR036967">
    <property type="entry name" value="Ribosomal_uS11_sf"/>
</dbReference>
<dbReference type="NCBIfam" id="NF007176">
    <property type="entry name" value="PRK09607.1"/>
    <property type="match status" value="1"/>
</dbReference>
<dbReference type="PANTHER" id="PTHR11759">
    <property type="entry name" value="40S RIBOSOMAL PROTEIN S14/30S RIBOSOMAL PROTEIN S11"/>
    <property type="match status" value="1"/>
</dbReference>
<dbReference type="Pfam" id="PF00411">
    <property type="entry name" value="Ribosomal_S11"/>
    <property type="match status" value="1"/>
</dbReference>
<dbReference type="PIRSF" id="PIRSF002131">
    <property type="entry name" value="Ribosomal_S11"/>
    <property type="match status" value="1"/>
</dbReference>
<dbReference type="SUPFAM" id="SSF53137">
    <property type="entry name" value="Translational machinery components"/>
    <property type="match status" value="1"/>
</dbReference>
<dbReference type="PROSITE" id="PS00054">
    <property type="entry name" value="RIBOSOMAL_S11"/>
    <property type="match status" value="1"/>
</dbReference>
<evidence type="ECO:0000256" key="1">
    <source>
        <dbReference type="SAM" id="MobiDB-lite"/>
    </source>
</evidence>
<evidence type="ECO:0000305" key="2"/>
<evidence type="ECO:0007829" key="3">
    <source>
        <dbReference type="PDB" id="3JAM"/>
    </source>
</evidence>
<evidence type="ECO:0007829" key="4">
    <source>
        <dbReference type="PDB" id="8RW1"/>
    </source>
</evidence>
<proteinExistence type="evidence at protein level"/>
<accession>P27069</accession>
<feature type="chain" id="PRO_0000123356" description="Small ribosomal subunit protein uS11">
    <location>
        <begin position="1"/>
        <end position="137"/>
    </location>
</feature>
<feature type="region of interest" description="Disordered" evidence="1">
    <location>
        <begin position="116"/>
        <end position="137"/>
    </location>
</feature>
<feature type="compositionally biased region" description="Basic residues" evidence="1">
    <location>
        <begin position="128"/>
        <end position="137"/>
    </location>
</feature>
<feature type="strand" evidence="4">
    <location>
        <begin position="14"/>
        <end position="16"/>
    </location>
</feature>
<feature type="strand" evidence="3">
    <location>
        <begin position="19"/>
        <end position="21"/>
    </location>
</feature>
<feature type="strand" evidence="4">
    <location>
        <begin position="23"/>
        <end position="25"/>
    </location>
</feature>
<feature type="strand" evidence="4">
    <location>
        <begin position="33"/>
        <end position="38"/>
    </location>
</feature>
<feature type="helix" evidence="3">
    <location>
        <begin position="44"/>
        <end position="47"/>
    </location>
</feature>
<feature type="strand" evidence="4">
    <location>
        <begin position="49"/>
        <end position="52"/>
    </location>
</feature>
<feature type="helix" evidence="4">
    <location>
        <begin position="57"/>
        <end position="74"/>
    </location>
</feature>
<feature type="strand" evidence="4">
    <location>
        <begin position="78"/>
        <end position="80"/>
    </location>
</feature>
<feature type="strand" evidence="4">
    <location>
        <begin position="82"/>
        <end position="84"/>
    </location>
</feature>
<feature type="helix" evidence="4">
    <location>
        <begin position="96"/>
        <end position="107"/>
    </location>
</feature>
<feature type="strand" evidence="3">
    <location>
        <begin position="111"/>
        <end position="117"/>
    </location>
</feature>